<keyword id="KW-0275">Fatty acid biosynthesis</keyword>
<keyword id="KW-0276">Fatty acid metabolism</keyword>
<keyword id="KW-0444">Lipid biosynthesis</keyword>
<keyword id="KW-0443">Lipid metabolism</keyword>
<keyword id="KW-0520">NAD</keyword>
<keyword id="KW-0560">Oxidoreductase</keyword>
<evidence type="ECO:0000255" key="1">
    <source>
        <dbReference type="HAMAP-Rule" id="MF_01838"/>
    </source>
</evidence>
<protein>
    <recommendedName>
        <fullName evidence="1">Enoyl-[acyl-carrier-protein] reductase [NADH]</fullName>
        <shortName evidence="1">ENR</shortName>
        <ecNumber evidence="1">1.3.1.9</ecNumber>
    </recommendedName>
</protein>
<proteinExistence type="inferred from homology"/>
<reference key="1">
    <citation type="submission" date="2007-04" db="EMBL/GenBank/DDBJ databases">
        <title>Complete sequence of Shewanella putrefaciens CN-32.</title>
        <authorList>
            <consortium name="US DOE Joint Genome Institute"/>
            <person name="Copeland A."/>
            <person name="Lucas S."/>
            <person name="Lapidus A."/>
            <person name="Barry K."/>
            <person name="Detter J.C."/>
            <person name="Glavina del Rio T."/>
            <person name="Hammon N."/>
            <person name="Israni S."/>
            <person name="Dalin E."/>
            <person name="Tice H."/>
            <person name="Pitluck S."/>
            <person name="Chain P."/>
            <person name="Malfatti S."/>
            <person name="Shin M."/>
            <person name="Vergez L."/>
            <person name="Schmutz J."/>
            <person name="Larimer F."/>
            <person name="Land M."/>
            <person name="Hauser L."/>
            <person name="Kyrpides N."/>
            <person name="Mikhailova N."/>
            <person name="Romine M.F."/>
            <person name="Fredrickson J."/>
            <person name="Tiedje J."/>
            <person name="Richardson P."/>
        </authorList>
    </citation>
    <scope>NUCLEOTIDE SEQUENCE [LARGE SCALE GENOMIC DNA]</scope>
    <source>
        <strain>CN-32 / ATCC BAA-453</strain>
    </source>
</reference>
<dbReference type="EC" id="1.3.1.9" evidence="1"/>
<dbReference type="EMBL" id="CP000681">
    <property type="protein sequence ID" value="ABP75220.1"/>
    <property type="molecule type" value="Genomic_DNA"/>
</dbReference>
<dbReference type="SMR" id="A4Y5I7"/>
<dbReference type="STRING" id="319224.Sputcn32_1495"/>
<dbReference type="KEGG" id="spc:Sputcn32_1495"/>
<dbReference type="eggNOG" id="COG3007">
    <property type="taxonomic scope" value="Bacteria"/>
</dbReference>
<dbReference type="HOGENOM" id="CLU_057698_1_0_6"/>
<dbReference type="UniPathway" id="UPA00094"/>
<dbReference type="GO" id="GO:0004318">
    <property type="term" value="F:enoyl-[acyl-carrier-protein] reductase (NADH) activity"/>
    <property type="evidence" value="ECO:0007669"/>
    <property type="project" value="UniProtKB-UniRule"/>
</dbReference>
<dbReference type="GO" id="GO:0051287">
    <property type="term" value="F:NAD binding"/>
    <property type="evidence" value="ECO:0007669"/>
    <property type="project" value="UniProtKB-UniRule"/>
</dbReference>
<dbReference type="GO" id="GO:0050343">
    <property type="term" value="F:trans-2-enoyl-CoA reductase (NADH) activity"/>
    <property type="evidence" value="ECO:0007669"/>
    <property type="project" value="TreeGrafter"/>
</dbReference>
<dbReference type="GO" id="GO:0006633">
    <property type="term" value="P:fatty acid biosynthetic process"/>
    <property type="evidence" value="ECO:0007669"/>
    <property type="project" value="UniProtKB-UniRule"/>
</dbReference>
<dbReference type="FunFam" id="3.40.50.720:FF:000221">
    <property type="entry name" value="Enoyl-[acyl-carrier-protein] reductase [NADH]"/>
    <property type="match status" value="1"/>
</dbReference>
<dbReference type="Gene3D" id="3.40.50.720">
    <property type="entry name" value="NAD(P)-binding Rossmann-like Domain"/>
    <property type="match status" value="1"/>
</dbReference>
<dbReference type="HAMAP" id="MF_01838">
    <property type="entry name" value="FabV_reductase"/>
    <property type="match status" value="1"/>
</dbReference>
<dbReference type="InterPro" id="IPR024906">
    <property type="entry name" value="Eno_Rdtase_FAD-bd_dom"/>
</dbReference>
<dbReference type="InterPro" id="IPR024910">
    <property type="entry name" value="Enoyl-CoA_Rdtase_cat_dom"/>
</dbReference>
<dbReference type="InterPro" id="IPR050048">
    <property type="entry name" value="FabV-like_NADH_b"/>
</dbReference>
<dbReference type="InterPro" id="IPR010758">
    <property type="entry name" value="Trans-2-enoyl-CoA_reductase"/>
</dbReference>
<dbReference type="NCBIfam" id="NF043048">
    <property type="entry name" value="EnoyACPredFabV"/>
    <property type="match status" value="1"/>
</dbReference>
<dbReference type="NCBIfam" id="NF010177">
    <property type="entry name" value="PRK13656.1"/>
    <property type="match status" value="1"/>
</dbReference>
<dbReference type="PANTHER" id="PTHR37480">
    <property type="entry name" value="ENOYL-[ACYL-CARRIER-PROTEIN] REDUCTASE [NADH]"/>
    <property type="match status" value="1"/>
</dbReference>
<dbReference type="PANTHER" id="PTHR37480:SF1">
    <property type="entry name" value="ENOYL-[ACYL-CARRIER-PROTEIN] REDUCTASE [NADH]"/>
    <property type="match status" value="1"/>
</dbReference>
<dbReference type="Pfam" id="PF07055">
    <property type="entry name" value="Eno-Rase_FAD_bd"/>
    <property type="match status" value="1"/>
</dbReference>
<dbReference type="Pfam" id="PF12242">
    <property type="entry name" value="Eno-Rase_NADH_b"/>
    <property type="match status" value="1"/>
</dbReference>
<dbReference type="Pfam" id="PF12241">
    <property type="entry name" value="Enoyl_reductase"/>
    <property type="match status" value="1"/>
</dbReference>
<name>FABV_SHEPC</name>
<comment type="function">
    <text evidence="1">Involved in the final reduction of the elongation cycle of fatty acid synthesis (FAS II). Catalyzes the reduction of a carbon-carbon double bond in an enoyl moiety that is covalently linked to an acyl carrier protein (ACP).</text>
</comment>
<comment type="catalytic activity">
    <reaction evidence="1">
        <text>a 2,3-saturated acyl-[ACP] + NAD(+) = a (2E)-enoyl-[ACP] + NADH + H(+)</text>
        <dbReference type="Rhea" id="RHEA:10240"/>
        <dbReference type="Rhea" id="RHEA-COMP:9925"/>
        <dbReference type="Rhea" id="RHEA-COMP:9926"/>
        <dbReference type="ChEBI" id="CHEBI:15378"/>
        <dbReference type="ChEBI" id="CHEBI:57540"/>
        <dbReference type="ChEBI" id="CHEBI:57945"/>
        <dbReference type="ChEBI" id="CHEBI:78784"/>
        <dbReference type="ChEBI" id="CHEBI:78785"/>
        <dbReference type="EC" id="1.3.1.9"/>
    </reaction>
</comment>
<comment type="pathway">
    <text evidence="1">Lipid metabolism; fatty acid biosynthesis.</text>
</comment>
<comment type="subunit">
    <text evidence="1">Monomer.</text>
</comment>
<comment type="similarity">
    <text evidence="1">Belongs to the TER reductase family.</text>
</comment>
<sequence length="401" mass="44282">MIIKPKIRGFICTTTHPVGCEANVQEQITFTKNKGKIANGPKKVLVVGSSSGYGLSSRIAAAFGCDAATIGVFFEKPGTETKPGTAGWYNSAAFDKFAKAEGLYSKSINCDAFSHEAKQKVIELIKQDLGEIDMVVYSLASPVRRLPDSGEVIRSALKPIGETYTATAVDTNKDCIIEATVEPATEQEIADTVTVMGGQDWELWIKALSEAGVLANNCKTVAYSYIGTELTWPIYWHGALGKAKMDLDRAAKALNDQLSATGGSANVAVLKSVVTQASSAIPVMPLYIAMVFKKMRQEGLHEGCMEQIYRMFSERLYRTDGAKPETDSDNRLRLDDWELRDDIQQHCRDLWPQVTTENLSELTDYREYKAEFIKLFGFGIEGIDYDADVNPYVEFDVIELQ</sequence>
<feature type="chain" id="PRO_1000070501" description="Enoyl-[acyl-carrier-protein] reductase [NADH]">
    <location>
        <begin position="1"/>
        <end position="401"/>
    </location>
</feature>
<feature type="active site" description="Proton donor" evidence="1">
    <location>
        <position position="235"/>
    </location>
</feature>
<feature type="binding site" evidence="1">
    <location>
        <begin position="48"/>
        <end position="53"/>
    </location>
    <ligand>
        <name>NAD(+)</name>
        <dbReference type="ChEBI" id="CHEBI:57540"/>
    </ligand>
</feature>
<feature type="binding site" evidence="1">
    <location>
        <begin position="74"/>
        <end position="75"/>
    </location>
    <ligand>
        <name>NAD(+)</name>
        <dbReference type="ChEBI" id="CHEBI:57540"/>
    </ligand>
</feature>
<feature type="binding site" evidence="1">
    <location>
        <begin position="111"/>
        <end position="112"/>
    </location>
    <ligand>
        <name>NAD(+)</name>
        <dbReference type="ChEBI" id="CHEBI:57540"/>
    </ligand>
</feature>
<feature type="binding site" evidence="1">
    <location>
        <begin position="139"/>
        <end position="140"/>
    </location>
    <ligand>
        <name>NAD(+)</name>
        <dbReference type="ChEBI" id="CHEBI:57540"/>
    </ligand>
</feature>
<feature type="binding site" evidence="1">
    <location>
        <position position="225"/>
    </location>
    <ligand>
        <name>substrate</name>
    </ligand>
</feature>
<feature type="binding site" evidence="1">
    <location>
        <position position="244"/>
    </location>
    <ligand>
        <name>NAD(+)</name>
        <dbReference type="ChEBI" id="CHEBI:57540"/>
    </ligand>
</feature>
<feature type="binding site" evidence="1">
    <location>
        <begin position="273"/>
        <end position="275"/>
    </location>
    <ligand>
        <name>NAD(+)</name>
        <dbReference type="ChEBI" id="CHEBI:57540"/>
    </ligand>
</feature>
<feature type="site" description="Plays an important role in discriminating NADH against NADPH" evidence="1">
    <location>
        <position position="75"/>
    </location>
</feature>
<gene>
    <name evidence="1" type="primary">fabV</name>
    <name type="ordered locus">Sputcn32_1495</name>
</gene>
<organism>
    <name type="scientific">Shewanella putrefaciens (strain CN-32 / ATCC BAA-453)</name>
    <dbReference type="NCBI Taxonomy" id="319224"/>
    <lineage>
        <taxon>Bacteria</taxon>
        <taxon>Pseudomonadati</taxon>
        <taxon>Pseudomonadota</taxon>
        <taxon>Gammaproteobacteria</taxon>
        <taxon>Alteromonadales</taxon>
        <taxon>Shewanellaceae</taxon>
        <taxon>Shewanella</taxon>
    </lineage>
</organism>
<accession>A4Y5I7</accession>